<feature type="chain" id="PRO_1000010880" description="Elongation factor P">
    <location>
        <begin position="1"/>
        <end position="188"/>
    </location>
</feature>
<proteinExistence type="inferred from homology"/>
<evidence type="ECO:0000255" key="1">
    <source>
        <dbReference type="HAMAP-Rule" id="MF_00141"/>
    </source>
</evidence>
<protein>
    <recommendedName>
        <fullName evidence="1">Elongation factor P</fullName>
        <shortName evidence="1">EF-P</shortName>
    </recommendedName>
</protein>
<organism>
    <name type="scientific">Sulfurovum sp. (strain NBC37-1)</name>
    <dbReference type="NCBI Taxonomy" id="387093"/>
    <lineage>
        <taxon>Bacteria</taxon>
        <taxon>Pseudomonadati</taxon>
        <taxon>Campylobacterota</taxon>
        <taxon>Epsilonproteobacteria</taxon>
        <taxon>Campylobacterales</taxon>
        <taxon>Sulfurovaceae</taxon>
        <taxon>Sulfurovum</taxon>
    </lineage>
</organism>
<keyword id="KW-0963">Cytoplasm</keyword>
<keyword id="KW-0251">Elongation factor</keyword>
<keyword id="KW-0648">Protein biosynthesis</keyword>
<gene>
    <name evidence="1" type="primary">efp</name>
    <name type="ordered locus">SUN_0556</name>
</gene>
<comment type="function">
    <text evidence="1">Involved in peptide bond synthesis. Stimulates efficient translation and peptide-bond synthesis on native or reconstituted 70S ribosomes in vitro. Probably functions indirectly by altering the affinity of the ribosome for aminoacyl-tRNA, thus increasing their reactivity as acceptors for peptidyl transferase.</text>
</comment>
<comment type="pathway">
    <text evidence="1">Protein biosynthesis; polypeptide chain elongation.</text>
</comment>
<comment type="subcellular location">
    <subcellularLocation>
        <location evidence="1">Cytoplasm</location>
    </subcellularLocation>
</comment>
<comment type="similarity">
    <text evidence="1">Belongs to the elongation factor P family.</text>
</comment>
<name>EFP_SULNB</name>
<accession>A6Q7Q7</accession>
<reference key="1">
    <citation type="journal article" date="2007" name="Proc. Natl. Acad. Sci. U.S.A.">
        <title>Deep-sea vent epsilon-proteobacterial genomes provide insights into emergence of pathogens.</title>
        <authorList>
            <person name="Nakagawa S."/>
            <person name="Takaki Y."/>
            <person name="Shimamura S."/>
            <person name="Reysenbach A.-L."/>
            <person name="Takai K."/>
            <person name="Horikoshi K."/>
        </authorList>
    </citation>
    <scope>NUCLEOTIDE SEQUENCE [LARGE SCALE GENOMIC DNA]</scope>
    <source>
        <strain>NBC37-1</strain>
    </source>
</reference>
<sequence length="188" mass="20860">MATIGMGDIKKGVRLELDGNPYKVTEFQHVKPGKGAAFVRVKIKNLKTGKVIEKTVHAGDKFEVPELEQKTMQYLYDDGEMLQFMDTTTFDQIGLTHEQVGKETFDFMIDGMEADILFHNGEAISVEIPQTVVLKIVETPPNFKGDSQGGKKPATLESGAVVQVPFHVLEGEMIKVDTVEGKYLEKAK</sequence>
<dbReference type="EMBL" id="AP009179">
    <property type="protein sequence ID" value="BAF71516.1"/>
    <property type="molecule type" value="Genomic_DNA"/>
</dbReference>
<dbReference type="RefSeq" id="WP_011980249.1">
    <property type="nucleotide sequence ID" value="NC_009663.1"/>
</dbReference>
<dbReference type="SMR" id="A6Q7Q7"/>
<dbReference type="STRING" id="387093.SUN_0556"/>
<dbReference type="KEGG" id="sun:SUN_0556"/>
<dbReference type="eggNOG" id="COG0231">
    <property type="taxonomic scope" value="Bacteria"/>
</dbReference>
<dbReference type="HOGENOM" id="CLU_074944_0_1_7"/>
<dbReference type="OrthoDB" id="9801844at2"/>
<dbReference type="UniPathway" id="UPA00345"/>
<dbReference type="Proteomes" id="UP000006378">
    <property type="component" value="Chromosome"/>
</dbReference>
<dbReference type="GO" id="GO:0005737">
    <property type="term" value="C:cytoplasm"/>
    <property type="evidence" value="ECO:0007669"/>
    <property type="project" value="UniProtKB-SubCell"/>
</dbReference>
<dbReference type="GO" id="GO:0003746">
    <property type="term" value="F:translation elongation factor activity"/>
    <property type="evidence" value="ECO:0007669"/>
    <property type="project" value="UniProtKB-UniRule"/>
</dbReference>
<dbReference type="GO" id="GO:0043043">
    <property type="term" value="P:peptide biosynthetic process"/>
    <property type="evidence" value="ECO:0007669"/>
    <property type="project" value="InterPro"/>
</dbReference>
<dbReference type="CDD" id="cd04470">
    <property type="entry name" value="S1_EF-P_repeat_1"/>
    <property type="match status" value="1"/>
</dbReference>
<dbReference type="CDD" id="cd05794">
    <property type="entry name" value="S1_EF-P_repeat_2"/>
    <property type="match status" value="1"/>
</dbReference>
<dbReference type="FunFam" id="2.30.30.30:FF:000003">
    <property type="entry name" value="Elongation factor P"/>
    <property type="match status" value="1"/>
</dbReference>
<dbReference type="FunFam" id="2.40.50.140:FF:000004">
    <property type="entry name" value="Elongation factor P"/>
    <property type="match status" value="1"/>
</dbReference>
<dbReference type="FunFam" id="2.40.50.140:FF:000009">
    <property type="entry name" value="Elongation factor P"/>
    <property type="match status" value="1"/>
</dbReference>
<dbReference type="Gene3D" id="2.30.30.30">
    <property type="match status" value="1"/>
</dbReference>
<dbReference type="Gene3D" id="2.40.50.140">
    <property type="entry name" value="Nucleic acid-binding proteins"/>
    <property type="match status" value="2"/>
</dbReference>
<dbReference type="HAMAP" id="MF_00141">
    <property type="entry name" value="EF_P"/>
    <property type="match status" value="1"/>
</dbReference>
<dbReference type="InterPro" id="IPR015365">
    <property type="entry name" value="Elong-fact-P_C"/>
</dbReference>
<dbReference type="InterPro" id="IPR012340">
    <property type="entry name" value="NA-bd_OB-fold"/>
</dbReference>
<dbReference type="InterPro" id="IPR014722">
    <property type="entry name" value="Rib_uL2_dom2"/>
</dbReference>
<dbReference type="InterPro" id="IPR020599">
    <property type="entry name" value="Transl_elong_fac_P/YeiP"/>
</dbReference>
<dbReference type="InterPro" id="IPR013185">
    <property type="entry name" value="Transl_elong_KOW-like"/>
</dbReference>
<dbReference type="InterPro" id="IPR001059">
    <property type="entry name" value="Transl_elong_P/YeiP_cen"/>
</dbReference>
<dbReference type="InterPro" id="IPR013852">
    <property type="entry name" value="Transl_elong_P/YeiP_CS"/>
</dbReference>
<dbReference type="InterPro" id="IPR011768">
    <property type="entry name" value="Transl_elongation_fac_P"/>
</dbReference>
<dbReference type="InterPro" id="IPR008991">
    <property type="entry name" value="Translation_prot_SH3-like_sf"/>
</dbReference>
<dbReference type="NCBIfam" id="TIGR00038">
    <property type="entry name" value="efp"/>
    <property type="match status" value="1"/>
</dbReference>
<dbReference type="NCBIfam" id="NF001810">
    <property type="entry name" value="PRK00529.1"/>
    <property type="match status" value="1"/>
</dbReference>
<dbReference type="PANTHER" id="PTHR30053">
    <property type="entry name" value="ELONGATION FACTOR P"/>
    <property type="match status" value="1"/>
</dbReference>
<dbReference type="PANTHER" id="PTHR30053:SF12">
    <property type="entry name" value="ELONGATION FACTOR P (EF-P) FAMILY PROTEIN"/>
    <property type="match status" value="1"/>
</dbReference>
<dbReference type="Pfam" id="PF01132">
    <property type="entry name" value="EFP"/>
    <property type="match status" value="1"/>
</dbReference>
<dbReference type="Pfam" id="PF08207">
    <property type="entry name" value="EFP_N"/>
    <property type="match status" value="1"/>
</dbReference>
<dbReference type="Pfam" id="PF09285">
    <property type="entry name" value="Elong-fact-P_C"/>
    <property type="match status" value="1"/>
</dbReference>
<dbReference type="PIRSF" id="PIRSF005901">
    <property type="entry name" value="EF-P"/>
    <property type="match status" value="1"/>
</dbReference>
<dbReference type="SMART" id="SM01185">
    <property type="entry name" value="EFP"/>
    <property type="match status" value="1"/>
</dbReference>
<dbReference type="SMART" id="SM00841">
    <property type="entry name" value="Elong-fact-P_C"/>
    <property type="match status" value="1"/>
</dbReference>
<dbReference type="SUPFAM" id="SSF50249">
    <property type="entry name" value="Nucleic acid-binding proteins"/>
    <property type="match status" value="2"/>
</dbReference>
<dbReference type="SUPFAM" id="SSF50104">
    <property type="entry name" value="Translation proteins SH3-like domain"/>
    <property type="match status" value="1"/>
</dbReference>
<dbReference type="PROSITE" id="PS01275">
    <property type="entry name" value="EFP"/>
    <property type="match status" value="1"/>
</dbReference>